<keyword id="KW-1185">Reference proteome</keyword>
<feature type="chain" id="PRO_0000176007" description="UPF0178 protein SPO3827">
    <location>
        <begin position="1"/>
        <end position="154"/>
    </location>
</feature>
<organism>
    <name type="scientific">Ruegeria pomeroyi (strain ATCC 700808 / DSM 15171 / DSS-3)</name>
    <name type="common">Silicibacter pomeroyi</name>
    <dbReference type="NCBI Taxonomy" id="246200"/>
    <lineage>
        <taxon>Bacteria</taxon>
        <taxon>Pseudomonadati</taxon>
        <taxon>Pseudomonadota</taxon>
        <taxon>Alphaproteobacteria</taxon>
        <taxon>Rhodobacterales</taxon>
        <taxon>Roseobacteraceae</taxon>
        <taxon>Ruegeria</taxon>
    </lineage>
</organism>
<sequence>MTTLYVDADACPVRAEAERVATRHRLRMAVVSNGGLRPSQNPLVETVIVPDGPDVADQWIAERAGRGDVVITADIPLAAKCVEAGARVLRHNGEAFTPANIGQQLAMRDLMADLRAANPLGAGGGGKPFSKADRARFLDALEREIRAAQRDAQG</sequence>
<evidence type="ECO:0000255" key="1">
    <source>
        <dbReference type="HAMAP-Rule" id="MF_00489"/>
    </source>
</evidence>
<protein>
    <recommendedName>
        <fullName evidence="1">UPF0178 protein SPO3827</fullName>
    </recommendedName>
</protein>
<proteinExistence type="inferred from homology"/>
<name>Y3827_RUEPO</name>
<comment type="similarity">
    <text evidence="1">Belongs to the UPF0178 family.</text>
</comment>
<gene>
    <name type="ordered locus">SPO3827</name>
</gene>
<reference key="1">
    <citation type="journal article" date="2004" name="Nature">
        <title>Genome sequence of Silicibacter pomeroyi reveals adaptations to the marine environment.</title>
        <authorList>
            <person name="Moran M.A."/>
            <person name="Buchan A."/>
            <person name="Gonzalez J.M."/>
            <person name="Heidelberg J.F."/>
            <person name="Whitman W.B."/>
            <person name="Kiene R.P."/>
            <person name="Henriksen J.R."/>
            <person name="King G.M."/>
            <person name="Belas R."/>
            <person name="Fuqua C."/>
            <person name="Brinkac L.M."/>
            <person name="Lewis M."/>
            <person name="Johri S."/>
            <person name="Weaver B."/>
            <person name="Pai G."/>
            <person name="Eisen J.A."/>
            <person name="Rahe E."/>
            <person name="Sheldon W.M."/>
            <person name="Ye W."/>
            <person name="Miller T.R."/>
            <person name="Carlton J."/>
            <person name="Rasko D.A."/>
            <person name="Paulsen I.T."/>
            <person name="Ren Q."/>
            <person name="Daugherty S.C."/>
            <person name="DeBoy R.T."/>
            <person name="Dodson R.J."/>
            <person name="Durkin A.S."/>
            <person name="Madupu R."/>
            <person name="Nelson W.C."/>
            <person name="Sullivan S.A."/>
            <person name="Rosovitz M.J."/>
            <person name="Haft D.H."/>
            <person name="Selengut J."/>
            <person name="Ward N."/>
        </authorList>
    </citation>
    <scope>NUCLEOTIDE SEQUENCE [LARGE SCALE GENOMIC DNA]</scope>
    <source>
        <strain>ATCC 700808 / DSM 15171 / DSS-3</strain>
    </source>
</reference>
<reference key="2">
    <citation type="journal article" date="2014" name="Stand. Genomic Sci.">
        <title>An updated genome annotation for the model marine bacterium Ruegeria pomeroyi DSS-3.</title>
        <authorList>
            <person name="Rivers A.R."/>
            <person name="Smith C.B."/>
            <person name="Moran M.A."/>
        </authorList>
    </citation>
    <scope>GENOME REANNOTATION</scope>
    <source>
        <strain>ATCC 700808 / DSM 15171 / DSS-3</strain>
    </source>
</reference>
<accession>Q5LLU4</accession>
<dbReference type="EMBL" id="CP000031">
    <property type="protein sequence ID" value="AAV97041.1"/>
    <property type="molecule type" value="Genomic_DNA"/>
</dbReference>
<dbReference type="RefSeq" id="WP_011049498.1">
    <property type="nucleotide sequence ID" value="NC_003911.12"/>
</dbReference>
<dbReference type="STRING" id="246200.SPO3827"/>
<dbReference type="PaxDb" id="246200-SPO3827"/>
<dbReference type="KEGG" id="sil:SPO3827"/>
<dbReference type="eggNOG" id="COG1671">
    <property type="taxonomic scope" value="Bacteria"/>
</dbReference>
<dbReference type="HOGENOM" id="CLU_106619_2_1_5"/>
<dbReference type="OrthoDB" id="9798918at2"/>
<dbReference type="Proteomes" id="UP000001023">
    <property type="component" value="Chromosome"/>
</dbReference>
<dbReference type="HAMAP" id="MF_00489">
    <property type="entry name" value="UPF0178"/>
    <property type="match status" value="1"/>
</dbReference>
<dbReference type="InterPro" id="IPR003791">
    <property type="entry name" value="UPF0178"/>
</dbReference>
<dbReference type="NCBIfam" id="NF001095">
    <property type="entry name" value="PRK00124.1"/>
    <property type="match status" value="1"/>
</dbReference>
<dbReference type="PANTHER" id="PTHR35146">
    <property type="entry name" value="UPF0178 PROTEIN YAII"/>
    <property type="match status" value="1"/>
</dbReference>
<dbReference type="PANTHER" id="PTHR35146:SF1">
    <property type="entry name" value="UPF0178 PROTEIN YAII"/>
    <property type="match status" value="1"/>
</dbReference>
<dbReference type="Pfam" id="PF02639">
    <property type="entry name" value="DUF188"/>
    <property type="match status" value="1"/>
</dbReference>